<organism>
    <name type="scientific">Sus scrofa</name>
    <name type="common">Pig</name>
    <dbReference type="NCBI Taxonomy" id="9823"/>
    <lineage>
        <taxon>Eukaryota</taxon>
        <taxon>Metazoa</taxon>
        <taxon>Chordata</taxon>
        <taxon>Craniata</taxon>
        <taxon>Vertebrata</taxon>
        <taxon>Euteleostomi</taxon>
        <taxon>Mammalia</taxon>
        <taxon>Eutheria</taxon>
        <taxon>Laurasiatheria</taxon>
        <taxon>Artiodactyla</taxon>
        <taxon>Suina</taxon>
        <taxon>Suidae</taxon>
        <taxon>Sus</taxon>
    </lineage>
</organism>
<reference key="1">
    <citation type="submission" date="2003-03" db="EMBL/GenBank/DDBJ databases">
        <title>Differential gene expression in atherosclerotic coronary arteries.</title>
        <authorList>
            <person name="Weiss B."/>
            <person name="Hehlgans S.I."/>
            <person name="Wietelmann A.B."/>
            <person name="Zeyer A."/>
            <person name="Richter M."/>
            <person name="Kloevekorn W.P."/>
            <person name="Zimmermann R."/>
            <person name="von der Ahe D."/>
        </authorList>
    </citation>
    <scope>NUCLEOTIDE SEQUENCE [MRNA]</scope>
    <source>
        <tissue>Aorta</tissue>
    </source>
</reference>
<feature type="chain" id="PRO_0000204190" description="Regulator of G-protein signaling 5">
    <location>
        <begin position="1"/>
        <end position="181"/>
    </location>
</feature>
<feature type="domain" description="RGS" evidence="3">
    <location>
        <begin position="64"/>
        <end position="180"/>
    </location>
</feature>
<protein>
    <recommendedName>
        <fullName>Regulator of G-protein signaling 5</fullName>
        <shortName>RGS5</shortName>
    </recommendedName>
</protein>
<accession>Q864Z2</accession>
<dbReference type="EMBL" id="AJ549925">
    <property type="protein sequence ID" value="CAD71257.1"/>
    <property type="molecule type" value="mRNA"/>
</dbReference>
<dbReference type="RefSeq" id="NP_999521.1">
    <property type="nucleotide sequence ID" value="NM_214356.1"/>
</dbReference>
<dbReference type="SMR" id="Q864Z2"/>
<dbReference type="FunCoup" id="Q864Z2">
    <property type="interactions" value="48"/>
</dbReference>
<dbReference type="STRING" id="9823.ENSSSCP00000072279"/>
<dbReference type="PaxDb" id="9823-ENSSSCP00000006753"/>
<dbReference type="Ensembl" id="ENSSSCT00000041659.3">
    <property type="protein sequence ID" value="ENSSSCP00000055403.1"/>
    <property type="gene ID" value="ENSSSCG00000037821.3"/>
</dbReference>
<dbReference type="Ensembl" id="ENSSSCT00015020965.1">
    <property type="protein sequence ID" value="ENSSSCP00015008245.1"/>
    <property type="gene ID" value="ENSSSCG00015015788.1"/>
</dbReference>
<dbReference type="Ensembl" id="ENSSSCT00025101795.1">
    <property type="protein sequence ID" value="ENSSSCP00025044992.1"/>
    <property type="gene ID" value="ENSSSCG00025073877.1"/>
</dbReference>
<dbReference type="Ensembl" id="ENSSSCT00030038508.1">
    <property type="protein sequence ID" value="ENSSSCP00030017704.1"/>
    <property type="gene ID" value="ENSSSCG00030027538.1"/>
</dbReference>
<dbReference type="Ensembl" id="ENSSSCT00035097653.1">
    <property type="protein sequence ID" value="ENSSSCP00035041214.1"/>
    <property type="gene ID" value="ENSSSCG00035072160.1"/>
</dbReference>
<dbReference type="Ensembl" id="ENSSSCT00045021069.1">
    <property type="protein sequence ID" value="ENSSSCP00045014511.1"/>
    <property type="gene ID" value="ENSSSCG00045012373.1"/>
</dbReference>
<dbReference type="Ensembl" id="ENSSSCT00055050271.1">
    <property type="protein sequence ID" value="ENSSSCP00055040170.1"/>
    <property type="gene ID" value="ENSSSCG00055025395.1"/>
</dbReference>
<dbReference type="Ensembl" id="ENSSSCT00065086024.1">
    <property type="protein sequence ID" value="ENSSSCP00065037610.1"/>
    <property type="gene ID" value="ENSSSCG00065062699.1"/>
</dbReference>
<dbReference type="Ensembl" id="ENSSSCT00070049761.1">
    <property type="protein sequence ID" value="ENSSSCP00070042015.1"/>
    <property type="gene ID" value="ENSSSCG00070024889.1"/>
</dbReference>
<dbReference type="Ensembl" id="ENSSSCT00115022151">
    <property type="protein sequence ID" value="ENSSSCP00115020983"/>
    <property type="gene ID" value="ENSSSCG00115012820"/>
</dbReference>
<dbReference type="GeneID" id="397640"/>
<dbReference type="KEGG" id="ssc:397640"/>
<dbReference type="CTD" id="8490"/>
<dbReference type="VGNC" id="VGNC:98844">
    <property type="gene designation" value="RGS5"/>
</dbReference>
<dbReference type="eggNOG" id="KOG3589">
    <property type="taxonomic scope" value="Eukaryota"/>
</dbReference>
<dbReference type="GeneTree" id="ENSGT00940000157380"/>
<dbReference type="HOGENOM" id="CLU_059863_3_0_1"/>
<dbReference type="InParanoid" id="Q864Z2"/>
<dbReference type="OMA" id="WQWRNSL"/>
<dbReference type="OrthoDB" id="196547at2759"/>
<dbReference type="TreeFam" id="TF315837"/>
<dbReference type="Reactome" id="R-SSC-416476">
    <property type="pathway name" value="G alpha (q) signalling events"/>
</dbReference>
<dbReference type="Reactome" id="R-SSC-418594">
    <property type="pathway name" value="G alpha (i) signalling events"/>
</dbReference>
<dbReference type="Proteomes" id="UP000008227">
    <property type="component" value="Chromosome 4"/>
</dbReference>
<dbReference type="Proteomes" id="UP000314985">
    <property type="component" value="Chromosome 4"/>
</dbReference>
<dbReference type="Proteomes" id="UP000694570">
    <property type="component" value="Unplaced"/>
</dbReference>
<dbReference type="Proteomes" id="UP000694571">
    <property type="component" value="Unplaced"/>
</dbReference>
<dbReference type="Proteomes" id="UP000694720">
    <property type="component" value="Unplaced"/>
</dbReference>
<dbReference type="Proteomes" id="UP000694722">
    <property type="component" value="Unplaced"/>
</dbReference>
<dbReference type="Proteomes" id="UP000694723">
    <property type="component" value="Unplaced"/>
</dbReference>
<dbReference type="Proteomes" id="UP000694724">
    <property type="component" value="Unplaced"/>
</dbReference>
<dbReference type="Proteomes" id="UP000694725">
    <property type="component" value="Unplaced"/>
</dbReference>
<dbReference type="Proteomes" id="UP000694726">
    <property type="component" value="Unplaced"/>
</dbReference>
<dbReference type="Proteomes" id="UP000694727">
    <property type="component" value="Unplaced"/>
</dbReference>
<dbReference type="Proteomes" id="UP000694728">
    <property type="component" value="Unplaced"/>
</dbReference>
<dbReference type="Bgee" id="ENSSSCG00000037821">
    <property type="expression patterns" value="Expressed in ovary and 41 other cell types or tissues"/>
</dbReference>
<dbReference type="ExpressionAtlas" id="Q864Z2">
    <property type="expression patterns" value="baseline and differential"/>
</dbReference>
<dbReference type="GO" id="GO:0005737">
    <property type="term" value="C:cytoplasm"/>
    <property type="evidence" value="ECO:0007669"/>
    <property type="project" value="UniProtKB-SubCell"/>
</dbReference>
<dbReference type="GO" id="GO:0016020">
    <property type="term" value="C:membrane"/>
    <property type="evidence" value="ECO:0007669"/>
    <property type="project" value="UniProtKB-SubCell"/>
</dbReference>
<dbReference type="GO" id="GO:0009968">
    <property type="term" value="P:negative regulation of signal transduction"/>
    <property type="evidence" value="ECO:0007669"/>
    <property type="project" value="UniProtKB-KW"/>
</dbReference>
<dbReference type="CDD" id="cd08717">
    <property type="entry name" value="RGS_RGS5"/>
    <property type="match status" value="1"/>
</dbReference>
<dbReference type="FunFam" id="1.10.167.10:FF:000001">
    <property type="entry name" value="Putative regulator of g-protein signaling 12"/>
    <property type="match status" value="1"/>
</dbReference>
<dbReference type="FunFam" id="1.10.196.10:FF:000001">
    <property type="entry name" value="Regulator of G-protein signaling 8"/>
    <property type="match status" value="1"/>
</dbReference>
<dbReference type="Gene3D" id="1.10.196.10">
    <property type="match status" value="1"/>
</dbReference>
<dbReference type="Gene3D" id="1.10.167.10">
    <property type="entry name" value="Regulator of G-protein Signalling 4, domain 2"/>
    <property type="match status" value="1"/>
</dbReference>
<dbReference type="InterPro" id="IPR016137">
    <property type="entry name" value="RGS"/>
</dbReference>
<dbReference type="InterPro" id="IPR034956">
    <property type="entry name" value="RGS_RGS5"/>
</dbReference>
<dbReference type="InterPro" id="IPR036305">
    <property type="entry name" value="RGS_sf"/>
</dbReference>
<dbReference type="InterPro" id="IPR024066">
    <property type="entry name" value="RGS_subdom1/3"/>
</dbReference>
<dbReference type="InterPro" id="IPR044926">
    <property type="entry name" value="RGS_subdomain_2"/>
</dbReference>
<dbReference type="PANTHER" id="PTHR10845">
    <property type="entry name" value="REGULATOR OF G PROTEIN SIGNALING"/>
    <property type="match status" value="1"/>
</dbReference>
<dbReference type="PANTHER" id="PTHR10845:SF42">
    <property type="entry name" value="REGULATOR OF G-PROTEIN SIGNALING 5"/>
    <property type="match status" value="1"/>
</dbReference>
<dbReference type="Pfam" id="PF00615">
    <property type="entry name" value="RGS"/>
    <property type="match status" value="1"/>
</dbReference>
<dbReference type="PRINTS" id="PR01301">
    <property type="entry name" value="RGSPROTEIN"/>
</dbReference>
<dbReference type="SMART" id="SM00315">
    <property type="entry name" value="RGS"/>
    <property type="match status" value="1"/>
</dbReference>
<dbReference type="SUPFAM" id="SSF48097">
    <property type="entry name" value="Regulator of G-protein signaling, RGS"/>
    <property type="match status" value="1"/>
</dbReference>
<dbReference type="PROSITE" id="PS50132">
    <property type="entry name" value="RGS"/>
    <property type="match status" value="1"/>
</dbReference>
<sequence length="181" mass="21054">MCKGLAALPHSCLERAKEIKIKLGILLQKPESAVDLVIPYNEKPDKPVKIQKPSLDEALQWRDSLDKLLQNNYGLASFKSFLKSEFSEENLEFWMACEDYKKIKSPVKMAEKAKKIYEEFIQSEAPKEVNIDHFTKEITMKNLVEPSPSSFDVAQKRIYALMEKDSLPRFVRSEFYQEFIK</sequence>
<gene>
    <name type="primary">RGS5</name>
</gene>
<proteinExistence type="evidence at transcript level"/>
<name>RGS5_PIG</name>
<comment type="function">
    <text evidence="1">Inhibits signal transduction by increasing the GTPase activity of G protein alpha subunits thereby driving them into their inactive GDP-bound form. Binds to G(i)-alpha and G(o)-alpha, but not to G(s)-alpha (By similarity).</text>
</comment>
<comment type="subcellular location">
    <subcellularLocation>
        <location evidence="2">Cytoplasm</location>
    </subcellularLocation>
    <subcellularLocation>
        <location evidence="2">Membrane</location>
    </subcellularLocation>
</comment>
<keyword id="KW-0963">Cytoplasm</keyword>
<keyword id="KW-0472">Membrane</keyword>
<keyword id="KW-1185">Reference proteome</keyword>
<keyword id="KW-0734">Signal transduction inhibitor</keyword>
<evidence type="ECO:0000250" key="1"/>
<evidence type="ECO:0000250" key="2">
    <source>
        <dbReference type="UniProtKB" id="O15539"/>
    </source>
</evidence>
<evidence type="ECO:0000255" key="3">
    <source>
        <dbReference type="PROSITE-ProRule" id="PRU00171"/>
    </source>
</evidence>